<sequence>MKPFAILTLLATAAALASCQSQPRELRPMSSAPQATGVEGSWVDPNGIVSTFAGGTFSTRTTDTNQLLASGNYVNVSPTLVEINMTSLVRNTQSKVNCALATPAQLNCTTDSGAQFSLARRG</sequence>
<organism>
    <name type="scientific">Rhizobium meliloti (strain 1021)</name>
    <name type="common">Ensifer meliloti</name>
    <name type="synonym">Sinorhizobium meliloti</name>
    <dbReference type="NCBI Taxonomy" id="266834"/>
    <lineage>
        <taxon>Bacteria</taxon>
        <taxon>Pseudomonadati</taxon>
        <taxon>Pseudomonadota</taxon>
        <taxon>Alphaproteobacteria</taxon>
        <taxon>Hyphomicrobiales</taxon>
        <taxon>Rhizobiaceae</taxon>
        <taxon>Sinorhizobium/Ensifer group</taxon>
        <taxon>Sinorhizobium</taxon>
    </lineage>
</organism>
<proteinExistence type="inferred from homology"/>
<evidence type="ECO:0000250" key="1"/>
<evidence type="ECO:0000255" key="2">
    <source>
        <dbReference type="PROSITE-ProRule" id="PRU00303"/>
    </source>
</evidence>
<evidence type="ECO:0000305" key="3"/>
<keyword id="KW-0998">Cell outer membrane</keyword>
<keyword id="KW-0449">Lipoprotein</keyword>
<keyword id="KW-0472">Membrane</keyword>
<keyword id="KW-0564">Palmitate</keyword>
<keyword id="KW-1185">Reference proteome</keyword>
<keyword id="KW-0732">Signal</keyword>
<reference key="1">
    <citation type="journal article" date="2001" name="Proc. Natl. Acad. Sci. U.S.A.">
        <title>Analysis of the chromosome sequence of the legume symbiont Sinorhizobium meliloti strain 1021.</title>
        <authorList>
            <person name="Capela D."/>
            <person name="Barloy-Hubler F."/>
            <person name="Gouzy J."/>
            <person name="Bothe G."/>
            <person name="Ampe F."/>
            <person name="Batut J."/>
            <person name="Boistard P."/>
            <person name="Becker A."/>
            <person name="Boutry M."/>
            <person name="Cadieu E."/>
            <person name="Dreano S."/>
            <person name="Gloux S."/>
            <person name="Godrie T."/>
            <person name="Goffeau A."/>
            <person name="Kahn D."/>
            <person name="Kiss E."/>
            <person name="Lelaure V."/>
            <person name="Masuy D."/>
            <person name="Pohl T."/>
            <person name="Portetelle D."/>
            <person name="Puehler A."/>
            <person name="Purnelle B."/>
            <person name="Ramsperger U."/>
            <person name="Renard C."/>
            <person name="Thebault P."/>
            <person name="Vandenbol M."/>
            <person name="Weidner S."/>
            <person name="Galibert F."/>
        </authorList>
    </citation>
    <scope>NUCLEOTIDE SEQUENCE [LARGE SCALE GENOMIC DNA]</scope>
    <source>
        <strain>1021</strain>
    </source>
</reference>
<reference key="2">
    <citation type="journal article" date="2001" name="Science">
        <title>The composite genome of the legume symbiont Sinorhizobium meliloti.</title>
        <authorList>
            <person name="Galibert F."/>
            <person name="Finan T.M."/>
            <person name="Long S.R."/>
            <person name="Puehler A."/>
            <person name="Abola P."/>
            <person name="Ampe F."/>
            <person name="Barloy-Hubler F."/>
            <person name="Barnett M.J."/>
            <person name="Becker A."/>
            <person name="Boistard P."/>
            <person name="Bothe G."/>
            <person name="Boutry M."/>
            <person name="Bowser L."/>
            <person name="Buhrmester J."/>
            <person name="Cadieu E."/>
            <person name="Capela D."/>
            <person name="Chain P."/>
            <person name="Cowie A."/>
            <person name="Davis R.W."/>
            <person name="Dreano S."/>
            <person name="Federspiel N.A."/>
            <person name="Fisher R.F."/>
            <person name="Gloux S."/>
            <person name="Godrie T."/>
            <person name="Goffeau A."/>
            <person name="Golding B."/>
            <person name="Gouzy J."/>
            <person name="Gurjal M."/>
            <person name="Hernandez-Lucas I."/>
            <person name="Hong A."/>
            <person name="Huizar L."/>
            <person name="Hyman R.W."/>
            <person name="Jones T."/>
            <person name="Kahn D."/>
            <person name="Kahn M.L."/>
            <person name="Kalman S."/>
            <person name="Keating D.H."/>
            <person name="Kiss E."/>
            <person name="Komp C."/>
            <person name="Lelaure V."/>
            <person name="Masuy D."/>
            <person name="Palm C."/>
            <person name="Peck M.C."/>
            <person name="Pohl T.M."/>
            <person name="Portetelle D."/>
            <person name="Purnelle B."/>
            <person name="Ramsperger U."/>
            <person name="Surzycki R."/>
            <person name="Thebault P."/>
            <person name="Vandenbol M."/>
            <person name="Vorhoelter F.J."/>
            <person name="Weidner S."/>
            <person name="Wells D.H."/>
            <person name="Wong K."/>
            <person name="Yeh K.-C."/>
            <person name="Batut J."/>
        </authorList>
    </citation>
    <scope>NUCLEOTIDE SEQUENCE [LARGE SCALE GENOMIC DNA]</scope>
    <source>
        <strain>1021</strain>
    </source>
</reference>
<feature type="signal peptide" evidence="2">
    <location>
        <begin position="1"/>
        <end position="18"/>
    </location>
</feature>
<feature type="chain" id="PRO_0000018242" description="Outer membrane lipoprotein omp10 homolog">
    <location>
        <begin position="19"/>
        <end position="122"/>
    </location>
</feature>
<feature type="lipid moiety-binding region" description="N-palmitoyl cysteine" evidence="2">
    <location>
        <position position="19"/>
    </location>
</feature>
<feature type="lipid moiety-binding region" description="S-diacylglycerol cysteine" evidence="2">
    <location>
        <position position="19"/>
    </location>
</feature>
<name>OMP10_RHIME</name>
<gene>
    <name type="primary">omp10</name>
    <name type="ordered locus">R02801</name>
    <name type="ORF">SMc04017</name>
</gene>
<comment type="subcellular location">
    <subcellularLocation>
        <location evidence="1">Cell outer membrane</location>
        <topology evidence="2">Lipid-anchor</topology>
    </subcellularLocation>
</comment>
<comment type="similarity">
    <text evidence="3">Belongs to the rhizobiaceae omp10 lipoprotein family.</text>
</comment>
<protein>
    <recommendedName>
        <fullName>Outer membrane lipoprotein omp10 homolog</fullName>
    </recommendedName>
</protein>
<dbReference type="EMBL" id="AL591688">
    <property type="protein sequence ID" value="CAC47380.1"/>
    <property type="molecule type" value="Genomic_DNA"/>
</dbReference>
<dbReference type="RefSeq" id="NP_386907.1">
    <property type="nucleotide sequence ID" value="NC_003047.1"/>
</dbReference>
<dbReference type="RefSeq" id="WP_003531074.1">
    <property type="nucleotide sequence ID" value="NC_003047.1"/>
</dbReference>
<dbReference type="EnsemblBacteria" id="CAC47380">
    <property type="protein sequence ID" value="CAC47380"/>
    <property type="gene ID" value="SMc04017"/>
</dbReference>
<dbReference type="GeneID" id="89577217"/>
<dbReference type="KEGG" id="sme:SMc04017"/>
<dbReference type="PATRIC" id="fig|266834.11.peg.4314"/>
<dbReference type="eggNOG" id="ENOG5032VTZ">
    <property type="taxonomic scope" value="Bacteria"/>
</dbReference>
<dbReference type="HOGENOM" id="CLU_136213_1_0_5"/>
<dbReference type="OrthoDB" id="7889062at2"/>
<dbReference type="Proteomes" id="UP000001976">
    <property type="component" value="Chromosome"/>
</dbReference>
<dbReference type="GO" id="GO:0009279">
    <property type="term" value="C:cell outer membrane"/>
    <property type="evidence" value="ECO:0007669"/>
    <property type="project" value="UniProtKB-SubCell"/>
</dbReference>
<dbReference type="InterPro" id="IPR049857">
    <property type="entry name" value="Omp10-like"/>
</dbReference>
<dbReference type="NCBIfam" id="NF041251">
    <property type="entry name" value="omp10_alpha_prot"/>
    <property type="match status" value="1"/>
</dbReference>
<dbReference type="PROSITE" id="PS51257">
    <property type="entry name" value="PROKAR_LIPOPROTEIN"/>
    <property type="match status" value="1"/>
</dbReference>
<accession>Q92M53</accession>